<organism>
    <name type="scientific">Chromohalobacter salexigens (strain ATCC BAA-138 / DSM 3043 / CIP 106854 / NCIMB 13768 / 1H11)</name>
    <dbReference type="NCBI Taxonomy" id="290398"/>
    <lineage>
        <taxon>Bacteria</taxon>
        <taxon>Pseudomonadati</taxon>
        <taxon>Pseudomonadota</taxon>
        <taxon>Gammaproteobacteria</taxon>
        <taxon>Oceanospirillales</taxon>
        <taxon>Halomonadaceae</taxon>
        <taxon>Chromohalobacter</taxon>
    </lineage>
</organism>
<reference key="1">
    <citation type="journal article" date="2011" name="Stand. Genomic Sci.">
        <title>Complete genome sequence of the halophilic and highly halotolerant Chromohalobacter salexigens type strain (1H11(T)).</title>
        <authorList>
            <person name="Copeland A."/>
            <person name="O'Connor K."/>
            <person name="Lucas S."/>
            <person name="Lapidus A."/>
            <person name="Berry K.W."/>
            <person name="Detter J.C."/>
            <person name="Del Rio T.G."/>
            <person name="Hammon N."/>
            <person name="Dalin E."/>
            <person name="Tice H."/>
            <person name="Pitluck S."/>
            <person name="Bruce D."/>
            <person name="Goodwin L."/>
            <person name="Han C."/>
            <person name="Tapia R."/>
            <person name="Saunders E."/>
            <person name="Schmutz J."/>
            <person name="Brettin T."/>
            <person name="Larimer F."/>
            <person name="Land M."/>
            <person name="Hauser L."/>
            <person name="Vargas C."/>
            <person name="Nieto J.J."/>
            <person name="Kyrpides N.C."/>
            <person name="Ivanova N."/>
            <person name="Goker M."/>
            <person name="Klenk H.P."/>
            <person name="Csonka L.N."/>
            <person name="Woyke T."/>
        </authorList>
    </citation>
    <scope>NUCLEOTIDE SEQUENCE [LARGE SCALE GENOMIC DNA]</scope>
    <source>
        <strain>ATCC BAA-138 / DSM 3043 / CIP 106854 / NCIMB 13768 / 1H11</strain>
    </source>
</reference>
<reference key="2">
    <citation type="submission" date="2011-02" db="PDB data bank">
        <title>Crystal structure of the mutant P317A of D-mannonate dehydratase from Chromohalobacter salexigens complexed with Mg and D-Gluconate.</title>
        <authorList>
            <person name="Fedorov A.A."/>
            <person name="Fedorov E.V."/>
            <person name="Wichelecki D."/>
            <person name="Gerlt J.A."/>
            <person name="Almo S.C."/>
        </authorList>
    </citation>
    <scope>X-RAY CRYSTALLOGRAPHY (1.45 ANGSTROMS) OF 2-403 IN COMPLEX WITH MAGNESIUM</scope>
</reference>
<reference key="3">
    <citation type="journal article" date="2014" name="Biochemistry">
        <title>Discovery of function in the enolase superfamily: D-mannonate and D-gluconate dehydratases in the D-mannonate dehydratase subgroup.</title>
        <authorList>
            <person name="Wichelecki D.J."/>
            <person name="Balthazor B.M."/>
            <person name="Chau A.C."/>
            <person name="Vetting M.W."/>
            <person name="Fedorov A.A."/>
            <person name="Fedorov E.V."/>
            <person name="Lukk T."/>
            <person name="Patskovsky Y.V."/>
            <person name="Stead M.B."/>
            <person name="Hillerich B.S."/>
            <person name="Seidel R.D."/>
            <person name="Almo S.C."/>
            <person name="Gerlt J.A."/>
        </authorList>
    </citation>
    <scope>X-RAY CRYSTALLOGRAPHY (1.45 ANGSTROMS) OF 2-403 IN COMPLEXES WITH MAGNESIUM; D-MANNONATE AND 2-KETO-3-DEOXY-D-GLUCONATE</scope>
    <scope>FUNCTION</scope>
    <scope>CATALYTIC ACTIVITY</scope>
    <scope>COFACTOR</scope>
    <scope>BIOPHYSICOCHEMICAL PROPERTIES</scope>
    <scope>MUTAGENESIS OF HIS-313 AND PRO-315</scope>
    <source>
        <strain>ATCC BAA-138 / DSM 3043 / CIP 106854 / NCIMB 13768 / 1H11</strain>
    </source>
</reference>
<protein>
    <recommendedName>
        <fullName>D-galactonate dehydratase family member ManD</fullName>
        <ecNumber>4.2.1.-</ecNumber>
    </recommendedName>
    <alternativeName>
        <fullName>D-gluconate dehydratase</fullName>
        <ecNumber>4.2.1.39</ecNumber>
    </alternativeName>
    <alternativeName>
        <fullName>D-mannonate dehydratase</fullName>
        <ecNumber>4.2.1.8</ecNumber>
    </alternativeName>
</protein>
<name>DMGD_CHRSD</name>
<comment type="function">
    <text evidence="2">Has low dehydratase activity with D-mannonate and D-gluconate, suggesting that these are not physiological substrates and that it has no significant role in the in vivo degradation of these compounds. Has no detectable activity with a panel of 70 other acid sugars (in vitro).</text>
</comment>
<comment type="catalytic activity">
    <reaction evidence="2">
        <text>D-mannonate = 2-dehydro-3-deoxy-D-gluconate + H2O</text>
        <dbReference type="Rhea" id="RHEA:20097"/>
        <dbReference type="ChEBI" id="CHEBI:15377"/>
        <dbReference type="ChEBI" id="CHEBI:17767"/>
        <dbReference type="ChEBI" id="CHEBI:57990"/>
        <dbReference type="EC" id="4.2.1.8"/>
    </reaction>
</comment>
<comment type="catalytic activity">
    <reaction evidence="2">
        <text>D-gluconate = 2-dehydro-3-deoxy-D-gluconate + H2O</text>
        <dbReference type="Rhea" id="RHEA:21612"/>
        <dbReference type="ChEBI" id="CHEBI:15377"/>
        <dbReference type="ChEBI" id="CHEBI:18391"/>
        <dbReference type="ChEBI" id="CHEBI:57990"/>
        <dbReference type="EC" id="4.2.1.39"/>
    </reaction>
</comment>
<comment type="cofactor">
    <cofactor evidence="2">
        <name>Mg(2+)</name>
        <dbReference type="ChEBI" id="CHEBI:18420"/>
    </cofactor>
    <text evidence="2">Binds 1 Mg(2+) ion per subunit.</text>
</comment>
<comment type="biophysicochemical properties">
    <kinetics>
        <text evidence="2">kcat is 0.02 sec(-1) with D-mannonate. kcat is 0.04 sec(-1) with D-gluconate.</text>
    </kinetics>
</comment>
<comment type="similarity">
    <text evidence="4">Belongs to the mandelate racemase/muconate lactonizing enzyme family. GalD subfamily.</text>
</comment>
<evidence type="ECO:0000250" key="1"/>
<evidence type="ECO:0000269" key="2">
    <source>
    </source>
</evidence>
<evidence type="ECO:0000269" key="3">
    <source ref="2"/>
</evidence>
<evidence type="ECO:0000305" key="4"/>
<evidence type="ECO:0007829" key="5">
    <source>
        <dbReference type="PDB" id="3BSM"/>
    </source>
</evidence>
<evidence type="ECO:0007829" key="6">
    <source>
        <dbReference type="PDB" id="3QKE"/>
    </source>
</evidence>
<dbReference type="EC" id="4.2.1.-"/>
<dbReference type="EC" id="4.2.1.39"/>
<dbReference type="EC" id="4.2.1.8"/>
<dbReference type="EMBL" id="CP000285">
    <property type="protein sequence ID" value="ABE60319.1"/>
    <property type="molecule type" value="Genomic_DNA"/>
</dbReference>
<dbReference type="RefSeq" id="WP_011508265.1">
    <property type="nucleotide sequence ID" value="NC_007963.1"/>
</dbReference>
<dbReference type="PDB" id="3BSM">
    <property type="method" value="X-ray"/>
    <property type="resolution" value="2.20 A"/>
    <property type="chains" value="A/B/C/D=2-403"/>
</dbReference>
<dbReference type="PDB" id="3OW1">
    <property type="method" value="X-ray"/>
    <property type="resolution" value="1.80 A"/>
    <property type="chains" value="A/B/C/D/E/F/G/H=2-403"/>
</dbReference>
<dbReference type="PDB" id="3P93">
    <property type="method" value="X-ray"/>
    <property type="resolution" value="1.80 A"/>
    <property type="chains" value="A/B/C/D/E/F/G/H=2-403"/>
</dbReference>
<dbReference type="PDB" id="3PK7">
    <property type="method" value="X-ray"/>
    <property type="resolution" value="1.64 A"/>
    <property type="chains" value="A/B/C/D/E/F/G/H=2-403"/>
</dbReference>
<dbReference type="PDB" id="3QKE">
    <property type="method" value="X-ray"/>
    <property type="resolution" value="1.55 A"/>
    <property type="chains" value="A/B/C/D/E/F/G/H=2-403"/>
</dbReference>
<dbReference type="PDB" id="3RGT">
    <property type="method" value="X-ray"/>
    <property type="resolution" value="1.90 A"/>
    <property type="chains" value="A/B/C/D=2-403"/>
</dbReference>
<dbReference type="PDB" id="4F4R">
    <property type="method" value="X-ray"/>
    <property type="resolution" value="1.80 A"/>
    <property type="chains" value="A=1-403"/>
</dbReference>
<dbReference type="PDB" id="4K2S">
    <property type="method" value="X-ray"/>
    <property type="resolution" value="1.70 A"/>
    <property type="chains" value="A/B/C/D/E/F/G/H=2-403"/>
</dbReference>
<dbReference type="PDB" id="4KPL">
    <property type="method" value="X-ray"/>
    <property type="resolution" value="2.00 A"/>
    <property type="chains" value="A/B/C/D/E/F/G/H=1-403"/>
</dbReference>
<dbReference type="PDB" id="4KT2">
    <property type="method" value="X-ray"/>
    <property type="resolution" value="1.80 A"/>
    <property type="chains" value="A/B/C/D/E/F/G/H=1-403"/>
</dbReference>
<dbReference type="PDB" id="4KWS">
    <property type="method" value="X-ray"/>
    <property type="resolution" value="1.64 A"/>
    <property type="chains" value="A/B/C/D/E/F/G/H=2-403"/>
</dbReference>
<dbReference type="PDBsum" id="3BSM"/>
<dbReference type="PDBsum" id="3OW1"/>
<dbReference type="PDBsum" id="3P93"/>
<dbReference type="PDBsum" id="3PK7"/>
<dbReference type="PDBsum" id="3QKE"/>
<dbReference type="PDBsum" id="3RGT"/>
<dbReference type="PDBsum" id="4F4R"/>
<dbReference type="PDBsum" id="4K2S"/>
<dbReference type="PDBsum" id="4KPL"/>
<dbReference type="PDBsum" id="4KT2"/>
<dbReference type="PDBsum" id="4KWS"/>
<dbReference type="SMR" id="Q1QT89"/>
<dbReference type="STRING" id="290398.Csal_2974"/>
<dbReference type="GeneID" id="95335663"/>
<dbReference type="KEGG" id="csa:Csal_2974"/>
<dbReference type="eggNOG" id="COG4948">
    <property type="taxonomic scope" value="Bacteria"/>
</dbReference>
<dbReference type="HOGENOM" id="CLU_030273_6_1_6"/>
<dbReference type="OrthoDB" id="9782675at2"/>
<dbReference type="EvolutionaryTrace" id="Q1QT89"/>
<dbReference type="Proteomes" id="UP000000239">
    <property type="component" value="Chromosome"/>
</dbReference>
<dbReference type="GO" id="GO:0047929">
    <property type="term" value="F:gluconate dehydratase activity"/>
    <property type="evidence" value="ECO:0007669"/>
    <property type="project" value="UniProtKB-EC"/>
</dbReference>
<dbReference type="GO" id="GO:0000287">
    <property type="term" value="F:magnesium ion binding"/>
    <property type="evidence" value="ECO:0000314"/>
    <property type="project" value="UniProtKB"/>
</dbReference>
<dbReference type="GO" id="GO:0008927">
    <property type="term" value="F:mannonate dehydratase activity"/>
    <property type="evidence" value="ECO:0000314"/>
    <property type="project" value="UniProtKB"/>
</dbReference>
<dbReference type="GO" id="GO:0009063">
    <property type="term" value="P:amino acid catabolic process"/>
    <property type="evidence" value="ECO:0007669"/>
    <property type="project" value="InterPro"/>
</dbReference>
<dbReference type="GO" id="GO:0016052">
    <property type="term" value="P:carbohydrate catabolic process"/>
    <property type="evidence" value="ECO:0000314"/>
    <property type="project" value="UniProtKB"/>
</dbReference>
<dbReference type="FunFam" id="3.20.20.120:FF:000004">
    <property type="entry name" value="D-galactonate dehydratase family protein"/>
    <property type="match status" value="1"/>
</dbReference>
<dbReference type="FunFam" id="3.30.390.10:FF:000002">
    <property type="entry name" value="D-galactonate dehydratase family protein"/>
    <property type="match status" value="1"/>
</dbReference>
<dbReference type="Gene3D" id="3.20.20.120">
    <property type="entry name" value="Enolase-like C-terminal domain"/>
    <property type="match status" value="1"/>
</dbReference>
<dbReference type="Gene3D" id="3.30.390.10">
    <property type="entry name" value="Enolase-like, N-terminal domain"/>
    <property type="match status" value="1"/>
</dbReference>
<dbReference type="InterPro" id="IPR034589">
    <property type="entry name" value="D-mannonate_dehydratase-like"/>
</dbReference>
<dbReference type="InterPro" id="IPR053379">
    <property type="entry name" value="D-mannonate_dehydratase_GalD"/>
</dbReference>
<dbReference type="InterPro" id="IPR034593">
    <property type="entry name" value="DgoD-like"/>
</dbReference>
<dbReference type="InterPro" id="IPR036849">
    <property type="entry name" value="Enolase-like_C_sf"/>
</dbReference>
<dbReference type="InterPro" id="IPR029017">
    <property type="entry name" value="Enolase-like_N"/>
</dbReference>
<dbReference type="InterPro" id="IPR029065">
    <property type="entry name" value="Enolase_C-like"/>
</dbReference>
<dbReference type="InterPro" id="IPR018110">
    <property type="entry name" value="Mandel_Rmase/mucon_lact_enz_CS"/>
</dbReference>
<dbReference type="InterPro" id="IPR013342">
    <property type="entry name" value="Mandelate_racemase_C"/>
</dbReference>
<dbReference type="InterPro" id="IPR013341">
    <property type="entry name" value="Mandelate_racemase_N_dom"/>
</dbReference>
<dbReference type="NCBIfam" id="NF043051">
    <property type="entry name" value="ManoateDhtManD"/>
    <property type="match status" value="1"/>
</dbReference>
<dbReference type="NCBIfam" id="NF011654">
    <property type="entry name" value="PRK15072.1"/>
    <property type="match status" value="1"/>
</dbReference>
<dbReference type="PANTHER" id="PTHR48080">
    <property type="entry name" value="D-GALACTONATE DEHYDRATASE-RELATED"/>
    <property type="match status" value="1"/>
</dbReference>
<dbReference type="PANTHER" id="PTHR48080:SF6">
    <property type="entry name" value="STARVATION-SENSING PROTEIN RSPA"/>
    <property type="match status" value="1"/>
</dbReference>
<dbReference type="Pfam" id="PF13378">
    <property type="entry name" value="MR_MLE_C"/>
    <property type="match status" value="1"/>
</dbReference>
<dbReference type="Pfam" id="PF02746">
    <property type="entry name" value="MR_MLE_N"/>
    <property type="match status" value="1"/>
</dbReference>
<dbReference type="SFLD" id="SFLDS00001">
    <property type="entry name" value="Enolase"/>
    <property type="match status" value="1"/>
</dbReference>
<dbReference type="SFLD" id="SFLDG00033">
    <property type="entry name" value="mannonate_dehydratase"/>
    <property type="match status" value="1"/>
</dbReference>
<dbReference type="SMART" id="SM00922">
    <property type="entry name" value="MR_MLE"/>
    <property type="match status" value="1"/>
</dbReference>
<dbReference type="SUPFAM" id="SSF51604">
    <property type="entry name" value="Enolase C-terminal domain-like"/>
    <property type="match status" value="1"/>
</dbReference>
<dbReference type="SUPFAM" id="SSF54826">
    <property type="entry name" value="Enolase N-terminal domain-like"/>
    <property type="match status" value="1"/>
</dbReference>
<dbReference type="PROSITE" id="PS00908">
    <property type="entry name" value="MR_MLE_1"/>
    <property type="match status" value="1"/>
</dbReference>
<gene>
    <name type="primary">manD</name>
    <name type="ordered locus">Csal_2974</name>
</gene>
<feature type="chain" id="PRO_0000429881" description="D-galactonate dehydratase family member ManD">
    <location>
        <begin position="1"/>
        <end position="403"/>
    </location>
</feature>
<feature type="active site" description="Proton donor/acceptor" evidence="1">
    <location>
        <position position="159"/>
    </location>
</feature>
<feature type="active site" description="Proton donor/acceptor" evidence="1">
    <location>
        <position position="213"/>
    </location>
</feature>
<feature type="binding site">
    <location>
        <position position="37"/>
    </location>
    <ligand>
        <name>substrate</name>
    </ligand>
</feature>
<feature type="binding site" evidence="1">
    <location>
        <position position="122"/>
    </location>
    <ligand>
        <name>substrate</name>
    </ligand>
</feature>
<feature type="binding site" evidence="3">
    <location>
        <position position="211"/>
    </location>
    <ligand>
        <name>Mg(2+)</name>
        <dbReference type="ChEBI" id="CHEBI:18420"/>
    </ligand>
</feature>
<feature type="binding site" evidence="3">
    <location>
        <position position="237"/>
    </location>
    <ligand>
        <name>Mg(2+)</name>
        <dbReference type="ChEBI" id="CHEBI:18420"/>
    </ligand>
</feature>
<feature type="binding site" evidence="3">
    <location>
        <position position="263"/>
    </location>
    <ligand>
        <name>Mg(2+)</name>
        <dbReference type="ChEBI" id="CHEBI:18420"/>
    </ligand>
</feature>
<feature type="binding site">
    <location>
        <position position="263"/>
    </location>
    <ligand>
        <name>substrate</name>
    </ligand>
</feature>
<feature type="binding site">
    <location>
        <position position="284"/>
    </location>
    <ligand>
        <name>substrate</name>
    </ligand>
</feature>
<feature type="binding site">
    <location>
        <position position="313"/>
    </location>
    <ligand>
        <name>substrate</name>
    </ligand>
</feature>
<feature type="binding site">
    <location>
        <position position="317"/>
    </location>
    <ligand>
        <name>substrate</name>
    </ligand>
</feature>
<feature type="binding site">
    <location>
        <position position="340"/>
    </location>
    <ligand>
        <name>substrate</name>
    </ligand>
</feature>
<feature type="site" description="Important for activity and substrate specificity; Pro is observed in family members with low D-mannonate dehydratase activity">
    <location>
        <position position="315"/>
    </location>
</feature>
<feature type="mutagenesis site" description="Abolishes catalytic activity.">
    <original>KTPGERYE</original>
    <variation>GAGGAGAG</variation>
    <location>
        <begin position="163"/>
        <end position="170"/>
    </location>
</feature>
<feature type="mutagenesis site" description="Abolishes activity with D-gluconate and D-mannonate." evidence="2">
    <original>H</original>
    <variation>N</variation>
    <location>
        <position position="313"/>
    </location>
</feature>
<feature type="mutagenesis site" description="Abolishes activity with D-gluconate. No effect on activity with D-mannonate." evidence="2">
    <original>H</original>
    <variation>Q</variation>
    <location>
        <position position="313"/>
    </location>
</feature>
<feature type="mutagenesis site" description="Strongly increases activity with D-mannonate. Slightly decreases activity with D-gluconate." evidence="2">
    <original>P</original>
    <variation>A</variation>
    <location>
        <position position="315"/>
    </location>
</feature>
<feature type="strand" evidence="6">
    <location>
        <begin position="2"/>
        <end position="11"/>
    </location>
</feature>
<feature type="strand" evidence="6">
    <location>
        <begin position="13"/>
        <end position="15"/>
    </location>
</feature>
<feature type="strand" evidence="6">
    <location>
        <begin position="17"/>
        <end position="24"/>
    </location>
</feature>
<feature type="strand" evidence="6">
    <location>
        <begin position="29"/>
        <end position="33"/>
    </location>
</feature>
<feature type="helix" evidence="6">
    <location>
        <begin position="40"/>
        <end position="50"/>
    </location>
</feature>
<feature type="helix" evidence="6">
    <location>
        <begin position="52"/>
        <end position="55"/>
    </location>
</feature>
<feature type="helix" evidence="6">
    <location>
        <begin position="63"/>
        <end position="73"/>
    </location>
</feature>
<feature type="turn" evidence="5">
    <location>
        <begin position="74"/>
        <end position="76"/>
    </location>
</feature>
<feature type="helix" evidence="6">
    <location>
        <begin position="80"/>
        <end position="101"/>
    </location>
</feature>
<feature type="helix" evidence="6">
    <location>
        <begin position="105"/>
        <end position="108"/>
    </location>
</feature>
<feature type="strand" evidence="6">
    <location>
        <begin position="115"/>
        <end position="127"/>
    </location>
</feature>
<feature type="helix" evidence="6">
    <location>
        <begin position="128"/>
        <end position="140"/>
    </location>
</feature>
<feature type="strand" evidence="6">
    <location>
        <begin position="144"/>
        <end position="150"/>
    </location>
</feature>
<feature type="strand" evidence="6">
    <location>
        <begin position="174"/>
        <end position="176"/>
    </location>
</feature>
<feature type="strand" evidence="6">
    <location>
        <begin position="179"/>
        <end position="182"/>
    </location>
</feature>
<feature type="helix" evidence="6">
    <location>
        <begin position="184"/>
        <end position="202"/>
    </location>
</feature>
<feature type="strand" evidence="6">
    <location>
        <begin position="204"/>
        <end position="211"/>
    </location>
</feature>
<feature type="helix" evidence="6">
    <location>
        <begin position="218"/>
        <end position="228"/>
    </location>
</feature>
<feature type="helix" evidence="6">
    <location>
        <begin position="229"/>
        <end position="231"/>
    </location>
</feature>
<feature type="strand" evidence="6">
    <location>
        <begin position="234"/>
        <end position="237"/>
    </location>
</feature>
<feature type="helix" evidence="6">
    <location>
        <begin position="245"/>
        <end position="248"/>
    </location>
</feature>
<feature type="helix" evidence="6">
    <location>
        <begin position="249"/>
        <end position="254"/>
    </location>
</feature>
<feature type="strand" evidence="6">
    <location>
        <begin position="259"/>
        <end position="261"/>
    </location>
</feature>
<feature type="helix" evidence="6">
    <location>
        <begin position="268"/>
        <end position="270"/>
    </location>
</feature>
<feature type="helix" evidence="6">
    <location>
        <begin position="272"/>
        <end position="276"/>
    </location>
</feature>
<feature type="strand" evidence="6">
    <location>
        <begin position="281"/>
        <end position="283"/>
    </location>
</feature>
<feature type="turn" evidence="6">
    <location>
        <begin position="287"/>
        <end position="291"/>
    </location>
</feature>
<feature type="helix" evidence="6">
    <location>
        <begin position="292"/>
        <end position="304"/>
    </location>
</feature>
<feature type="turn" evidence="6">
    <location>
        <begin position="305"/>
        <end position="307"/>
    </location>
</feature>
<feature type="strand" evidence="6">
    <location>
        <begin position="309"/>
        <end position="312"/>
    </location>
</feature>
<feature type="helix" evidence="6">
    <location>
        <begin position="320"/>
        <end position="332"/>
    </location>
</feature>
<feature type="strand" evidence="6">
    <location>
        <begin position="336"/>
        <end position="340"/>
    </location>
</feature>
<feature type="helix" evidence="6">
    <location>
        <begin position="346"/>
        <end position="351"/>
    </location>
</feature>
<feature type="strand" evidence="6">
    <location>
        <begin position="357"/>
        <end position="359"/>
    </location>
</feature>
<feature type="strand" evidence="6">
    <location>
        <begin position="362"/>
        <end position="364"/>
    </location>
</feature>
<feature type="strand" evidence="6">
    <location>
        <begin position="368"/>
        <end position="373"/>
    </location>
</feature>
<feature type="helix" evidence="6">
    <location>
        <begin position="377"/>
        <end position="380"/>
    </location>
</feature>
<feature type="strand" evidence="6">
    <location>
        <begin position="392"/>
        <end position="395"/>
    </location>
</feature>
<sequence>MKIRDAYTIVTCPGRNFVTLKIVTESGTHGIGDATLNGREMAVAAYLDEHVVPALIGRDAGRIEDTWQYLYRGAYWRRGPVTMTAIAAVDMALWDIKAKAAGMPLYQLLGGKSRERVMTYAHCTGQTIEDCLGEVARHVELGYRAVRVQSGVPGIETTYGVAKTPGERYEPADSSLPAEHVWSTEKYLNHAPKLFAAVRERFGDDLHVLHDVHHRLTPIEAARLGKAVEPYHLFWLEDCVPAENQESLRLIREHTTTPLAIGEVFNSIHDCRELIQNQWIDYIRMPLTHGGGITAMRRVADLASLYHVRTGFHGPTDLSPVCLGAAIHFDTWVPNFGIQEHMPHTDETDAVFPHDYRFEDGHFLAGESPGHGVDIDEELAAKYPYERASLPVNRLEDGTLWHW</sequence>
<keyword id="KW-0002">3D-structure</keyword>
<keyword id="KW-0456">Lyase</keyword>
<keyword id="KW-0460">Magnesium</keyword>
<keyword id="KW-0479">Metal-binding</keyword>
<keyword id="KW-1185">Reference proteome</keyword>
<accession>Q1QT89</accession>
<proteinExistence type="evidence at protein level"/>